<comment type="function">
    <text evidence="3">mRNA cap-binding component of the eukaryotic translation initiation factor 3 (eIF-3) complex, which is involved in protein synthesis of a specialized repertoire of mRNAs and, together with other initiation factors, stimulates binding of mRNA and methionyl-tRNAi to the 40S ribosome. The eIF-3 complex specifically targets and initiates translation of a subset of mRNAs involved in cell proliferation. In the eIF-3 complex, eif3d specifically recognizes and binds the 7-methylguanosine cap of a subset of mRNAs.</text>
</comment>
<comment type="subunit">
    <text evidence="3">Component of the eukaryotic translation initiation factor 3 (eIF-3) complex. The eIF-3 complex interacts with pix.</text>
</comment>
<comment type="subcellular location">
    <subcellularLocation>
        <location evidence="3">Cytoplasm</location>
    </subcellularLocation>
</comment>
<comment type="domain">
    <text evidence="3">The RNA gate region regulates mRNA cap recognition to prevent promiscuous mRNA-binding before assembly of eif3d into the full eukaryotic translation initiation factor 3 (eIF-3) complex.</text>
</comment>
<comment type="similarity">
    <text evidence="3">Belongs to the eIF-3 subunit D family.</text>
</comment>
<accession>B4R222</accession>
<keyword id="KW-0963">Cytoplasm</keyword>
<keyword id="KW-0396">Initiation factor</keyword>
<keyword id="KW-0597">Phosphoprotein</keyword>
<keyword id="KW-0648">Protein biosynthesis</keyword>
<keyword id="KW-1185">Reference proteome</keyword>
<keyword id="KW-0694">RNA-binding</keyword>
<sequence length="560" mass="63772">MSETINTAAQFPSFEKPTVQFNEKGWGPCELPDTFKDVPYQPFSKNDRLGKICDWTNTSSNDKKYQNKYASSFGTGNQYSYYHEEDETTFHLVDTARVQKPPHQRGRFRNMRNSRSGRGRNARGGLNTHGMTTLSGKNVKARDPRHGRGMGKKFGHRGPPPKMRESSVAVRADWASIEEMDFPRLIKLSLPNIKEGVDIVTCGTLEYYDKTYDRINVKNEKPLQKIDRIVHTVTTTDDPVIRRLSKTVGNVFATDAILATIMCSTRSNYSWDIVIEKVGDKVFMDKRDHTEFDLLTVNESSVEPPTDDDSSCNSPRNLAIEATFINHNFSQQVLKTGDQEPKYKFEESNPFISEDEDIQVASVGYRYKKWELGSDIVLVARCEHDGVLQTPSGEPQFMTIKALNEWDSKLANGVEWRQKLDTQRGAVLANELRNNACKLAKWTVQAVLAGSDQLKLGYVSRINPRDHSRHVILGTQQFKPHEFATQINLSMDNAWGILRCIIDLVMKQKDGKYLIMKDPNKPIIRLYDIPDNTFDSDDSDDGEGDDEGFQQVYNYAHNKI</sequence>
<gene>
    <name evidence="3" type="primary">eIF3d1</name>
    <name type="synonym">eIF-3p66</name>
    <name type="ORF">GD21022</name>
</gene>
<organism>
    <name type="scientific">Drosophila simulans</name>
    <name type="common">Fruit fly</name>
    <dbReference type="NCBI Taxonomy" id="7240"/>
    <lineage>
        <taxon>Eukaryota</taxon>
        <taxon>Metazoa</taxon>
        <taxon>Ecdysozoa</taxon>
        <taxon>Arthropoda</taxon>
        <taxon>Hexapoda</taxon>
        <taxon>Insecta</taxon>
        <taxon>Pterygota</taxon>
        <taxon>Neoptera</taxon>
        <taxon>Endopterygota</taxon>
        <taxon>Diptera</taxon>
        <taxon>Brachycera</taxon>
        <taxon>Muscomorpha</taxon>
        <taxon>Ephydroidea</taxon>
        <taxon>Drosophilidae</taxon>
        <taxon>Drosophila</taxon>
        <taxon>Sophophora</taxon>
    </lineage>
</organism>
<name>EI3D1_DROSI</name>
<reference key="1">
    <citation type="journal article" date="2007" name="Nature">
        <title>Evolution of genes and genomes on the Drosophila phylogeny.</title>
        <authorList>
            <consortium name="Drosophila 12 genomes consortium"/>
        </authorList>
    </citation>
    <scope>NUCLEOTIDE SEQUENCE [LARGE SCALE GENOMIC DNA]</scope>
</reference>
<proteinExistence type="inferred from homology"/>
<dbReference type="EMBL" id="CM000364">
    <property type="protein sequence ID" value="EDX14079.1"/>
    <property type="molecule type" value="Genomic_DNA"/>
</dbReference>
<dbReference type="SMR" id="B4R222"/>
<dbReference type="STRING" id="7240.B4R222"/>
<dbReference type="EnsemblMetazoa" id="FBtr0220932">
    <property type="protein sequence ID" value="FBpp0219424"/>
    <property type="gene ID" value="FBgn0192477"/>
</dbReference>
<dbReference type="EnsemblMetazoa" id="XM_002104540.3">
    <property type="protein sequence ID" value="XP_002104576.1"/>
    <property type="gene ID" value="LOC6729256"/>
</dbReference>
<dbReference type="GeneID" id="6729256"/>
<dbReference type="KEGG" id="dsi:Dsimw501_GD21022"/>
<dbReference type="CTD" id="42789"/>
<dbReference type="HOGENOM" id="CLU_024521_2_0_1"/>
<dbReference type="OMA" id="FMDKRDN"/>
<dbReference type="OrthoDB" id="16538at2759"/>
<dbReference type="PhylomeDB" id="B4R222"/>
<dbReference type="ChiTaRS" id="eIF-3p66">
    <property type="organism name" value="fly"/>
</dbReference>
<dbReference type="Proteomes" id="UP000000304">
    <property type="component" value="Chromosome 3R"/>
</dbReference>
<dbReference type="Bgee" id="FBgn0192477">
    <property type="expression patterns" value="Expressed in embryo and 3 other cell types or tissues"/>
</dbReference>
<dbReference type="GO" id="GO:0016282">
    <property type="term" value="C:eukaryotic 43S preinitiation complex"/>
    <property type="evidence" value="ECO:0007669"/>
    <property type="project" value="UniProtKB-UniRule"/>
</dbReference>
<dbReference type="GO" id="GO:0033290">
    <property type="term" value="C:eukaryotic 48S preinitiation complex"/>
    <property type="evidence" value="ECO:0007669"/>
    <property type="project" value="UniProtKB-UniRule"/>
</dbReference>
<dbReference type="GO" id="GO:0005852">
    <property type="term" value="C:eukaryotic translation initiation factor 3 complex"/>
    <property type="evidence" value="ECO:0000250"/>
    <property type="project" value="UniProtKB"/>
</dbReference>
<dbReference type="GO" id="GO:0005634">
    <property type="term" value="C:nucleus"/>
    <property type="evidence" value="ECO:0007669"/>
    <property type="project" value="EnsemblMetazoa"/>
</dbReference>
<dbReference type="GO" id="GO:0098808">
    <property type="term" value="F:mRNA cap binding"/>
    <property type="evidence" value="ECO:0007669"/>
    <property type="project" value="UniProtKB-UniRule"/>
</dbReference>
<dbReference type="GO" id="GO:0003743">
    <property type="term" value="F:translation initiation factor activity"/>
    <property type="evidence" value="ECO:0000250"/>
    <property type="project" value="UniProtKB"/>
</dbReference>
<dbReference type="GO" id="GO:0002191">
    <property type="term" value="P:cap-dependent translational initiation"/>
    <property type="evidence" value="ECO:0007669"/>
    <property type="project" value="UniProtKB-UniRule"/>
</dbReference>
<dbReference type="GO" id="GO:0001732">
    <property type="term" value="P:formation of cytoplasmic translation initiation complex"/>
    <property type="evidence" value="ECO:0007669"/>
    <property type="project" value="UniProtKB-UniRule"/>
</dbReference>
<dbReference type="GO" id="GO:0006446">
    <property type="term" value="P:regulation of translational initiation"/>
    <property type="evidence" value="ECO:0000250"/>
    <property type="project" value="UniProtKB"/>
</dbReference>
<dbReference type="HAMAP" id="MF_03003">
    <property type="entry name" value="eIF3d"/>
    <property type="match status" value="1"/>
</dbReference>
<dbReference type="InterPro" id="IPR007783">
    <property type="entry name" value="eIF3d"/>
</dbReference>
<dbReference type="PANTHER" id="PTHR12399">
    <property type="entry name" value="EUKARYOTIC TRANSLATION INITIATION FACTOR 3 SUBUNIT 7"/>
    <property type="match status" value="1"/>
</dbReference>
<dbReference type="PANTHER" id="PTHR12399:SF0">
    <property type="entry name" value="EUKARYOTIC TRANSLATION INITIATION FACTOR 3 SUBUNIT D"/>
    <property type="match status" value="1"/>
</dbReference>
<dbReference type="Pfam" id="PF05091">
    <property type="entry name" value="eIF-3_zeta"/>
    <property type="match status" value="1"/>
</dbReference>
<dbReference type="PIRSF" id="PIRSF016281">
    <property type="entry name" value="EIF-3_zeta"/>
    <property type="match status" value="1"/>
</dbReference>
<protein>
    <recommendedName>
        <fullName evidence="3">Eukaryotic translation initiation factor 3 subunit D-1</fullName>
        <shortName evidence="3">eIF3d-1</shortName>
    </recommendedName>
    <alternativeName>
        <fullName evidence="3">Eukaryotic translation initiation factor 3 subunit 7-1</fullName>
    </alternativeName>
    <alternativeName>
        <fullName>Eukaryotic translation initiation factor 3 subunit p66</fullName>
    </alternativeName>
</protein>
<evidence type="ECO:0000250" key="1"/>
<evidence type="ECO:0000250" key="2">
    <source>
        <dbReference type="UniProtKB" id="K7IM66"/>
    </source>
</evidence>
<evidence type="ECO:0000255" key="3">
    <source>
        <dbReference type="HAMAP-Rule" id="MF_03003"/>
    </source>
</evidence>
<evidence type="ECO:0000256" key="4">
    <source>
        <dbReference type="SAM" id="MobiDB-lite"/>
    </source>
</evidence>
<feature type="chain" id="PRO_0000364158" description="Eukaryotic translation initiation factor 3 subunit D-1">
    <location>
        <begin position="1"/>
        <end position="560"/>
    </location>
</feature>
<feature type="region of interest" description="Disordered" evidence="4">
    <location>
        <begin position="98"/>
        <end position="166"/>
    </location>
</feature>
<feature type="region of interest" description="RNA gate" evidence="2">
    <location>
        <begin position="291"/>
        <end position="305"/>
    </location>
</feature>
<feature type="compositionally biased region" description="Basic residues" evidence="4">
    <location>
        <begin position="100"/>
        <end position="121"/>
    </location>
</feature>
<feature type="compositionally biased region" description="Basic residues" evidence="4">
    <location>
        <begin position="147"/>
        <end position="156"/>
    </location>
</feature>
<feature type="modified residue" description="Phosphothreonine" evidence="1">
    <location>
        <position position="128"/>
    </location>
</feature>